<gene>
    <name evidence="1" type="primary">rplA</name>
    <name type="ordered locus">TDE_2424</name>
</gene>
<proteinExistence type="inferred from homology"/>
<dbReference type="EMBL" id="AE017226">
    <property type="protein sequence ID" value="AAS12942.1"/>
    <property type="molecule type" value="Genomic_DNA"/>
</dbReference>
<dbReference type="RefSeq" id="NP_973023.1">
    <property type="nucleotide sequence ID" value="NC_002967.9"/>
</dbReference>
<dbReference type="RefSeq" id="WP_002667601.1">
    <property type="nucleotide sequence ID" value="NC_002967.9"/>
</dbReference>
<dbReference type="SMR" id="Q73JJ4"/>
<dbReference type="STRING" id="243275.TDE_2424"/>
<dbReference type="PaxDb" id="243275-TDE_2424"/>
<dbReference type="GeneID" id="2739849"/>
<dbReference type="KEGG" id="tde:TDE_2424"/>
<dbReference type="PATRIC" id="fig|243275.7.peg.2291"/>
<dbReference type="eggNOG" id="COG0081">
    <property type="taxonomic scope" value="Bacteria"/>
</dbReference>
<dbReference type="HOGENOM" id="CLU_062853_0_0_12"/>
<dbReference type="OrthoDB" id="9803740at2"/>
<dbReference type="Proteomes" id="UP000008212">
    <property type="component" value="Chromosome"/>
</dbReference>
<dbReference type="GO" id="GO:0015934">
    <property type="term" value="C:large ribosomal subunit"/>
    <property type="evidence" value="ECO:0007669"/>
    <property type="project" value="InterPro"/>
</dbReference>
<dbReference type="GO" id="GO:0019843">
    <property type="term" value="F:rRNA binding"/>
    <property type="evidence" value="ECO:0007669"/>
    <property type="project" value="UniProtKB-UniRule"/>
</dbReference>
<dbReference type="GO" id="GO:0003735">
    <property type="term" value="F:structural constituent of ribosome"/>
    <property type="evidence" value="ECO:0007669"/>
    <property type="project" value="InterPro"/>
</dbReference>
<dbReference type="GO" id="GO:0000049">
    <property type="term" value="F:tRNA binding"/>
    <property type="evidence" value="ECO:0007669"/>
    <property type="project" value="UniProtKB-KW"/>
</dbReference>
<dbReference type="GO" id="GO:0006417">
    <property type="term" value="P:regulation of translation"/>
    <property type="evidence" value="ECO:0007669"/>
    <property type="project" value="UniProtKB-KW"/>
</dbReference>
<dbReference type="GO" id="GO:0006412">
    <property type="term" value="P:translation"/>
    <property type="evidence" value="ECO:0007669"/>
    <property type="project" value="UniProtKB-UniRule"/>
</dbReference>
<dbReference type="CDD" id="cd00403">
    <property type="entry name" value="Ribosomal_L1"/>
    <property type="match status" value="1"/>
</dbReference>
<dbReference type="FunFam" id="3.40.50.790:FF:000001">
    <property type="entry name" value="50S ribosomal protein L1"/>
    <property type="match status" value="1"/>
</dbReference>
<dbReference type="Gene3D" id="3.30.190.20">
    <property type="match status" value="1"/>
</dbReference>
<dbReference type="Gene3D" id="3.40.50.790">
    <property type="match status" value="1"/>
</dbReference>
<dbReference type="HAMAP" id="MF_01318_B">
    <property type="entry name" value="Ribosomal_uL1_B"/>
    <property type="match status" value="1"/>
</dbReference>
<dbReference type="InterPro" id="IPR005878">
    <property type="entry name" value="Ribosom_uL1_bac-type"/>
</dbReference>
<dbReference type="InterPro" id="IPR002143">
    <property type="entry name" value="Ribosomal_uL1"/>
</dbReference>
<dbReference type="InterPro" id="IPR023674">
    <property type="entry name" value="Ribosomal_uL1-like"/>
</dbReference>
<dbReference type="InterPro" id="IPR028364">
    <property type="entry name" value="Ribosomal_uL1/biogenesis"/>
</dbReference>
<dbReference type="InterPro" id="IPR016095">
    <property type="entry name" value="Ribosomal_uL1_3-a/b-sand"/>
</dbReference>
<dbReference type="InterPro" id="IPR023673">
    <property type="entry name" value="Ribosomal_uL1_CS"/>
</dbReference>
<dbReference type="NCBIfam" id="TIGR01169">
    <property type="entry name" value="rplA_bact"/>
    <property type="match status" value="1"/>
</dbReference>
<dbReference type="PANTHER" id="PTHR36427">
    <property type="entry name" value="54S RIBOSOMAL PROTEIN L1, MITOCHONDRIAL"/>
    <property type="match status" value="1"/>
</dbReference>
<dbReference type="PANTHER" id="PTHR36427:SF3">
    <property type="entry name" value="LARGE RIBOSOMAL SUBUNIT PROTEIN UL1M"/>
    <property type="match status" value="1"/>
</dbReference>
<dbReference type="Pfam" id="PF00687">
    <property type="entry name" value="Ribosomal_L1"/>
    <property type="match status" value="1"/>
</dbReference>
<dbReference type="PIRSF" id="PIRSF002155">
    <property type="entry name" value="Ribosomal_L1"/>
    <property type="match status" value="1"/>
</dbReference>
<dbReference type="SUPFAM" id="SSF56808">
    <property type="entry name" value="Ribosomal protein L1"/>
    <property type="match status" value="1"/>
</dbReference>
<dbReference type="PROSITE" id="PS01199">
    <property type="entry name" value="RIBOSOMAL_L1"/>
    <property type="match status" value="1"/>
</dbReference>
<evidence type="ECO:0000255" key="1">
    <source>
        <dbReference type="HAMAP-Rule" id="MF_01318"/>
    </source>
</evidence>
<evidence type="ECO:0000305" key="2"/>
<name>RL1_TREDE</name>
<sequence length="226" mass="24680">MKHGKNYKNALAKYDSAASYELPKAVDIVKELKYAKFDETVEVHVSLTLGKGQSVRDTLVLPHQFRGEKKVLVFCTDDRVKEALDAGAAYAGSTEYIEKVKGGWLDFDIAVATPDMMKDVGRLGMVLGRRGLMPNPKTGTVTTDIASAINELKKGRVEFRADKGGVVHLPVGKVSMDSSKIVENVQALINETMRKKPADAKGDYIRSVSISSTMGPGVWVDYKVGE</sequence>
<keyword id="KW-1185">Reference proteome</keyword>
<keyword id="KW-0678">Repressor</keyword>
<keyword id="KW-0687">Ribonucleoprotein</keyword>
<keyword id="KW-0689">Ribosomal protein</keyword>
<keyword id="KW-0694">RNA-binding</keyword>
<keyword id="KW-0699">rRNA-binding</keyword>
<keyword id="KW-0810">Translation regulation</keyword>
<keyword id="KW-0820">tRNA-binding</keyword>
<reference key="1">
    <citation type="journal article" date="2004" name="Proc. Natl. Acad. Sci. U.S.A.">
        <title>Comparison of the genome of the oral pathogen Treponema denticola with other spirochete genomes.</title>
        <authorList>
            <person name="Seshadri R."/>
            <person name="Myers G.S.A."/>
            <person name="Tettelin H."/>
            <person name="Eisen J.A."/>
            <person name="Heidelberg J.F."/>
            <person name="Dodson R.J."/>
            <person name="Davidsen T.M."/>
            <person name="DeBoy R.T."/>
            <person name="Fouts D.E."/>
            <person name="Haft D.H."/>
            <person name="Selengut J."/>
            <person name="Ren Q."/>
            <person name="Brinkac L.M."/>
            <person name="Madupu R."/>
            <person name="Kolonay J.F."/>
            <person name="Durkin S.A."/>
            <person name="Daugherty S.C."/>
            <person name="Shetty J."/>
            <person name="Shvartsbeyn A."/>
            <person name="Gebregeorgis E."/>
            <person name="Geer K."/>
            <person name="Tsegaye G."/>
            <person name="Malek J.A."/>
            <person name="Ayodeji B."/>
            <person name="Shatsman S."/>
            <person name="McLeod M.P."/>
            <person name="Smajs D."/>
            <person name="Howell J.K."/>
            <person name="Pal S."/>
            <person name="Amin A."/>
            <person name="Vashisth P."/>
            <person name="McNeill T.Z."/>
            <person name="Xiang Q."/>
            <person name="Sodergren E."/>
            <person name="Baca E."/>
            <person name="Weinstock G.M."/>
            <person name="Norris S.J."/>
            <person name="Fraser C.M."/>
            <person name="Paulsen I.T."/>
        </authorList>
    </citation>
    <scope>NUCLEOTIDE SEQUENCE [LARGE SCALE GENOMIC DNA]</scope>
    <source>
        <strain>ATCC 35405 / DSM 14222 / CIP 103919 / JCM 8153 / KCTC 15104</strain>
    </source>
</reference>
<feature type="chain" id="PRO_0000125767" description="Large ribosomal subunit protein uL1">
    <location>
        <begin position="1"/>
        <end position="226"/>
    </location>
</feature>
<protein>
    <recommendedName>
        <fullName evidence="1">Large ribosomal subunit protein uL1</fullName>
    </recommendedName>
    <alternativeName>
        <fullName evidence="2">50S ribosomal protein L1</fullName>
    </alternativeName>
</protein>
<accession>Q73JJ4</accession>
<comment type="function">
    <text evidence="1">Binds directly to 23S rRNA. The L1 stalk is quite mobile in the ribosome, and is involved in E site tRNA release.</text>
</comment>
<comment type="function">
    <text evidence="1">Protein L1 is also a translational repressor protein, it controls the translation of the L11 operon by binding to its mRNA.</text>
</comment>
<comment type="subunit">
    <text evidence="1">Part of the 50S ribosomal subunit.</text>
</comment>
<comment type="similarity">
    <text evidence="1">Belongs to the universal ribosomal protein uL1 family.</text>
</comment>
<organism>
    <name type="scientific">Treponema denticola (strain ATCC 35405 / DSM 14222 / CIP 103919 / JCM 8153 / KCTC 15104)</name>
    <dbReference type="NCBI Taxonomy" id="243275"/>
    <lineage>
        <taxon>Bacteria</taxon>
        <taxon>Pseudomonadati</taxon>
        <taxon>Spirochaetota</taxon>
        <taxon>Spirochaetia</taxon>
        <taxon>Spirochaetales</taxon>
        <taxon>Treponemataceae</taxon>
        <taxon>Treponema</taxon>
    </lineage>
</organism>